<feature type="chain" id="PRO_1000008897" description="Elongation factor G">
    <location>
        <begin position="1"/>
        <end position="700"/>
    </location>
</feature>
<feature type="domain" description="tr-type G">
    <location>
        <begin position="8"/>
        <end position="290"/>
    </location>
</feature>
<feature type="binding site" evidence="1">
    <location>
        <begin position="17"/>
        <end position="24"/>
    </location>
    <ligand>
        <name>GTP</name>
        <dbReference type="ChEBI" id="CHEBI:37565"/>
    </ligand>
</feature>
<feature type="binding site" evidence="1">
    <location>
        <begin position="88"/>
        <end position="92"/>
    </location>
    <ligand>
        <name>GTP</name>
        <dbReference type="ChEBI" id="CHEBI:37565"/>
    </ligand>
</feature>
<feature type="binding site" evidence="1">
    <location>
        <begin position="142"/>
        <end position="145"/>
    </location>
    <ligand>
        <name>GTP</name>
        <dbReference type="ChEBI" id="CHEBI:37565"/>
    </ligand>
</feature>
<protein>
    <recommendedName>
        <fullName evidence="1">Elongation factor G</fullName>
        <shortName evidence="1">EF-G</shortName>
    </recommendedName>
</protein>
<gene>
    <name evidence="1" type="primary">fusA</name>
    <name type="ordered locus">COSY_0166</name>
</gene>
<comment type="function">
    <text evidence="1">Catalyzes the GTP-dependent ribosomal translocation step during translation elongation. During this step, the ribosome changes from the pre-translocational (PRE) to the post-translocational (POST) state as the newly formed A-site-bound peptidyl-tRNA and P-site-bound deacylated tRNA move to the P and E sites, respectively. Catalyzes the coordinated movement of the two tRNA molecules, the mRNA and conformational changes in the ribosome.</text>
</comment>
<comment type="subcellular location">
    <subcellularLocation>
        <location evidence="1">Cytoplasm</location>
    </subcellularLocation>
</comment>
<comment type="similarity">
    <text evidence="1">Belongs to the TRAFAC class translation factor GTPase superfamily. Classic translation factor GTPase family. EF-G/EF-2 subfamily.</text>
</comment>
<dbReference type="EMBL" id="AP009247">
    <property type="protein sequence ID" value="BAF61296.1"/>
    <property type="molecule type" value="Genomic_DNA"/>
</dbReference>
<dbReference type="RefSeq" id="WP_011929566.1">
    <property type="nucleotide sequence ID" value="NC_009465.1"/>
</dbReference>
<dbReference type="SMR" id="A5CXN7"/>
<dbReference type="STRING" id="412965.COSY_0166"/>
<dbReference type="KEGG" id="vok:COSY_0166"/>
<dbReference type="eggNOG" id="COG0480">
    <property type="taxonomic scope" value="Bacteria"/>
</dbReference>
<dbReference type="HOGENOM" id="CLU_002794_4_1_6"/>
<dbReference type="OrthoDB" id="9804431at2"/>
<dbReference type="Proteomes" id="UP000000247">
    <property type="component" value="Chromosome"/>
</dbReference>
<dbReference type="GO" id="GO:0005737">
    <property type="term" value="C:cytoplasm"/>
    <property type="evidence" value="ECO:0007669"/>
    <property type="project" value="UniProtKB-SubCell"/>
</dbReference>
<dbReference type="GO" id="GO:0005525">
    <property type="term" value="F:GTP binding"/>
    <property type="evidence" value="ECO:0007669"/>
    <property type="project" value="UniProtKB-UniRule"/>
</dbReference>
<dbReference type="GO" id="GO:0003924">
    <property type="term" value="F:GTPase activity"/>
    <property type="evidence" value="ECO:0007669"/>
    <property type="project" value="InterPro"/>
</dbReference>
<dbReference type="GO" id="GO:0097216">
    <property type="term" value="F:guanosine tetraphosphate binding"/>
    <property type="evidence" value="ECO:0007669"/>
    <property type="project" value="UniProtKB-ARBA"/>
</dbReference>
<dbReference type="GO" id="GO:0003746">
    <property type="term" value="F:translation elongation factor activity"/>
    <property type="evidence" value="ECO:0007669"/>
    <property type="project" value="UniProtKB-UniRule"/>
</dbReference>
<dbReference type="GO" id="GO:0032790">
    <property type="term" value="P:ribosome disassembly"/>
    <property type="evidence" value="ECO:0007669"/>
    <property type="project" value="TreeGrafter"/>
</dbReference>
<dbReference type="CDD" id="cd01886">
    <property type="entry name" value="EF-G"/>
    <property type="match status" value="1"/>
</dbReference>
<dbReference type="CDD" id="cd16262">
    <property type="entry name" value="EFG_III"/>
    <property type="match status" value="1"/>
</dbReference>
<dbReference type="CDD" id="cd01434">
    <property type="entry name" value="EFG_mtEFG1_IV"/>
    <property type="match status" value="1"/>
</dbReference>
<dbReference type="CDD" id="cd03713">
    <property type="entry name" value="EFG_mtEFG_C"/>
    <property type="match status" value="1"/>
</dbReference>
<dbReference type="CDD" id="cd04088">
    <property type="entry name" value="EFG_mtEFG_II"/>
    <property type="match status" value="1"/>
</dbReference>
<dbReference type="FunFam" id="2.40.30.10:FF:000006">
    <property type="entry name" value="Elongation factor G"/>
    <property type="match status" value="1"/>
</dbReference>
<dbReference type="FunFam" id="3.30.230.10:FF:000003">
    <property type="entry name" value="Elongation factor G"/>
    <property type="match status" value="1"/>
</dbReference>
<dbReference type="FunFam" id="3.30.70.240:FF:000001">
    <property type="entry name" value="Elongation factor G"/>
    <property type="match status" value="1"/>
</dbReference>
<dbReference type="FunFam" id="3.30.70.870:FF:000001">
    <property type="entry name" value="Elongation factor G"/>
    <property type="match status" value="1"/>
</dbReference>
<dbReference type="FunFam" id="3.40.50.300:FF:000029">
    <property type="entry name" value="Elongation factor G"/>
    <property type="match status" value="1"/>
</dbReference>
<dbReference type="Gene3D" id="3.30.230.10">
    <property type="match status" value="1"/>
</dbReference>
<dbReference type="Gene3D" id="3.30.70.240">
    <property type="match status" value="1"/>
</dbReference>
<dbReference type="Gene3D" id="3.30.70.870">
    <property type="entry name" value="Elongation Factor G (Translational Gtpase), domain 3"/>
    <property type="match status" value="1"/>
</dbReference>
<dbReference type="Gene3D" id="3.40.50.300">
    <property type="entry name" value="P-loop containing nucleotide triphosphate hydrolases"/>
    <property type="match status" value="1"/>
</dbReference>
<dbReference type="Gene3D" id="2.40.30.10">
    <property type="entry name" value="Translation factors"/>
    <property type="match status" value="1"/>
</dbReference>
<dbReference type="HAMAP" id="MF_00054_B">
    <property type="entry name" value="EF_G_EF_2_B"/>
    <property type="match status" value="1"/>
</dbReference>
<dbReference type="InterPro" id="IPR041095">
    <property type="entry name" value="EFG_II"/>
</dbReference>
<dbReference type="InterPro" id="IPR009022">
    <property type="entry name" value="EFG_III"/>
</dbReference>
<dbReference type="InterPro" id="IPR035647">
    <property type="entry name" value="EFG_III/V"/>
</dbReference>
<dbReference type="InterPro" id="IPR047872">
    <property type="entry name" value="EFG_IV"/>
</dbReference>
<dbReference type="InterPro" id="IPR035649">
    <property type="entry name" value="EFG_V"/>
</dbReference>
<dbReference type="InterPro" id="IPR000640">
    <property type="entry name" value="EFG_V-like"/>
</dbReference>
<dbReference type="InterPro" id="IPR004161">
    <property type="entry name" value="EFTu-like_2"/>
</dbReference>
<dbReference type="InterPro" id="IPR031157">
    <property type="entry name" value="G_TR_CS"/>
</dbReference>
<dbReference type="InterPro" id="IPR027417">
    <property type="entry name" value="P-loop_NTPase"/>
</dbReference>
<dbReference type="InterPro" id="IPR020568">
    <property type="entry name" value="Ribosomal_Su5_D2-typ_SF"/>
</dbReference>
<dbReference type="InterPro" id="IPR014721">
    <property type="entry name" value="Ribsml_uS5_D2-typ_fold_subgr"/>
</dbReference>
<dbReference type="InterPro" id="IPR005225">
    <property type="entry name" value="Small_GTP-bd"/>
</dbReference>
<dbReference type="InterPro" id="IPR000795">
    <property type="entry name" value="T_Tr_GTP-bd_dom"/>
</dbReference>
<dbReference type="InterPro" id="IPR009000">
    <property type="entry name" value="Transl_B-barrel_sf"/>
</dbReference>
<dbReference type="InterPro" id="IPR004540">
    <property type="entry name" value="Transl_elong_EFG/EF2"/>
</dbReference>
<dbReference type="InterPro" id="IPR005517">
    <property type="entry name" value="Transl_elong_EFG/EF2_IV"/>
</dbReference>
<dbReference type="NCBIfam" id="TIGR00484">
    <property type="entry name" value="EF-G"/>
    <property type="match status" value="1"/>
</dbReference>
<dbReference type="NCBIfam" id="NF009381">
    <property type="entry name" value="PRK12740.1-5"/>
    <property type="match status" value="1"/>
</dbReference>
<dbReference type="NCBIfam" id="TIGR00231">
    <property type="entry name" value="small_GTP"/>
    <property type="match status" value="1"/>
</dbReference>
<dbReference type="PANTHER" id="PTHR43261:SF1">
    <property type="entry name" value="RIBOSOME-RELEASING FACTOR 2, MITOCHONDRIAL"/>
    <property type="match status" value="1"/>
</dbReference>
<dbReference type="PANTHER" id="PTHR43261">
    <property type="entry name" value="TRANSLATION ELONGATION FACTOR G-RELATED"/>
    <property type="match status" value="1"/>
</dbReference>
<dbReference type="Pfam" id="PF00679">
    <property type="entry name" value="EFG_C"/>
    <property type="match status" value="1"/>
</dbReference>
<dbReference type="Pfam" id="PF14492">
    <property type="entry name" value="EFG_III"/>
    <property type="match status" value="1"/>
</dbReference>
<dbReference type="Pfam" id="PF03764">
    <property type="entry name" value="EFG_IV"/>
    <property type="match status" value="1"/>
</dbReference>
<dbReference type="Pfam" id="PF00009">
    <property type="entry name" value="GTP_EFTU"/>
    <property type="match status" value="1"/>
</dbReference>
<dbReference type="Pfam" id="PF03144">
    <property type="entry name" value="GTP_EFTU_D2"/>
    <property type="match status" value="1"/>
</dbReference>
<dbReference type="PRINTS" id="PR00315">
    <property type="entry name" value="ELONGATNFCT"/>
</dbReference>
<dbReference type="SMART" id="SM00838">
    <property type="entry name" value="EFG_C"/>
    <property type="match status" value="1"/>
</dbReference>
<dbReference type="SMART" id="SM00889">
    <property type="entry name" value="EFG_IV"/>
    <property type="match status" value="1"/>
</dbReference>
<dbReference type="SUPFAM" id="SSF54980">
    <property type="entry name" value="EF-G C-terminal domain-like"/>
    <property type="match status" value="2"/>
</dbReference>
<dbReference type="SUPFAM" id="SSF52540">
    <property type="entry name" value="P-loop containing nucleoside triphosphate hydrolases"/>
    <property type="match status" value="1"/>
</dbReference>
<dbReference type="SUPFAM" id="SSF54211">
    <property type="entry name" value="Ribosomal protein S5 domain 2-like"/>
    <property type="match status" value="1"/>
</dbReference>
<dbReference type="SUPFAM" id="SSF50447">
    <property type="entry name" value="Translation proteins"/>
    <property type="match status" value="1"/>
</dbReference>
<dbReference type="PROSITE" id="PS00301">
    <property type="entry name" value="G_TR_1"/>
    <property type="match status" value="1"/>
</dbReference>
<dbReference type="PROSITE" id="PS51722">
    <property type="entry name" value="G_TR_2"/>
    <property type="match status" value="1"/>
</dbReference>
<sequence length="700" mass="77729">MARTTPLDRYRNVGIMAHIDAGKTTTTERILLYTGRTHRIGEVHDGSATMDWMEQEQERGITITSAATTCFWKGMDGQFEDHRVNIIDTPGHVDFTIEVERSLKVLDSACAVFCAVGGVEPQSETVWRQANKYNVPRIGFVNKMDRSGADFLRVCKQIKTRLGGNPVPMQIAIGAEESFEGVIDLISMKAIFWNEVDQGATYETRDIPIELQGLAKEQYEFMVESAAEANDELMEKYLEESKLSNHDIKKGIRLRAIKSEIIPMFCGSAFKNKGVQAVLDAMIMYMPSPLDVDAITGISDDKDETVVPRKADDNEPFAALAFKIATDPFVGNLTFFRVYSGVLEAGDFVYNSSKGKKERIGRMVQMHSNERDEIKEVRAGDIAAAIGLKDVTTGDTLCDMKEKIILERMEFPEPVIALAVEPKTKADQEKMGIALGKLAAEDPSFRVSTDEESGQTIIAGMGELHLDIIVDRMVREFDVECNVGAPQVSYREAITTMVEHQHKFVKQSGGRGQYGHVYLRIEPQEPGTGYEFVDEIKGGVIPKEYMPAVNKGVQEQMENGVLAGFPLVDIKVTVYDGSYHDVDSNEIAFKIAASKCLSEGVKMANPQLLEPMMAVEVLTPEDYMGDVMGDINRRRGIVSAMEDMPAGKQVKAEVPLAEMFGYSNDLRSITQGRANYSMEFAKYTAAPKNVADEIIEKLNK</sequence>
<name>EFG_VESOH</name>
<evidence type="ECO:0000255" key="1">
    <source>
        <dbReference type="HAMAP-Rule" id="MF_00054"/>
    </source>
</evidence>
<keyword id="KW-0963">Cytoplasm</keyword>
<keyword id="KW-0251">Elongation factor</keyword>
<keyword id="KW-0342">GTP-binding</keyword>
<keyword id="KW-0547">Nucleotide-binding</keyword>
<keyword id="KW-0648">Protein biosynthesis</keyword>
<keyword id="KW-1185">Reference proteome</keyword>
<organism>
    <name type="scientific">Vesicomyosocius okutanii subsp. Calyptogena okutanii (strain HA)</name>
    <dbReference type="NCBI Taxonomy" id="412965"/>
    <lineage>
        <taxon>Bacteria</taxon>
        <taxon>Pseudomonadati</taxon>
        <taxon>Pseudomonadota</taxon>
        <taxon>Gammaproteobacteria</taxon>
        <taxon>Candidatus Pseudothioglobaceae</taxon>
        <taxon>Candidatus Vesicomyosocius</taxon>
    </lineage>
</organism>
<accession>A5CXN7</accession>
<proteinExistence type="inferred from homology"/>
<reference key="1">
    <citation type="journal article" date="2007" name="Curr. Biol.">
        <title>Reduced genome of the thioautotrophic intracellular symbiont in a deep-sea clam, Calyptogena okutanii.</title>
        <authorList>
            <person name="Kuwahara H."/>
            <person name="Yoshida T."/>
            <person name="Takaki Y."/>
            <person name="Shimamura S."/>
            <person name="Nishi S."/>
            <person name="Harada M."/>
            <person name="Matsuyama K."/>
            <person name="Takishita K."/>
            <person name="Kawato M."/>
            <person name="Uematsu K."/>
            <person name="Fujiwara Y."/>
            <person name="Sato T."/>
            <person name="Kato C."/>
            <person name="Kitagawa M."/>
            <person name="Kato I."/>
            <person name="Maruyama T."/>
        </authorList>
    </citation>
    <scope>NUCLEOTIDE SEQUENCE [LARGE SCALE GENOMIC DNA]</scope>
    <source>
        <strain>HA</strain>
    </source>
</reference>